<proteinExistence type="inferred from homology"/>
<feature type="chain" id="PRO_0000059559" description="Xylulose kinase">
    <location>
        <begin position="1"/>
        <end position="481"/>
    </location>
</feature>
<feature type="active site" description="Proton acceptor" evidence="1">
    <location>
        <position position="239"/>
    </location>
</feature>
<feature type="binding site" evidence="1">
    <location>
        <begin position="81"/>
        <end position="82"/>
    </location>
    <ligand>
        <name>substrate</name>
    </ligand>
</feature>
<feature type="site" description="Important for activity" evidence="1">
    <location>
        <position position="13"/>
    </location>
</feature>
<name>XYLB_STRRU</name>
<protein>
    <recommendedName>
        <fullName evidence="1">Xylulose kinase</fullName>
        <shortName evidence="1">Xylulokinase</shortName>
        <ecNumber evidence="1">2.7.1.17</ecNumber>
    </recommendedName>
</protein>
<reference key="1">
    <citation type="journal article" date="1991" name="J. Bacteriol.">
        <title>Genetic organization and regulation of the xylose degradation genes in Streptomyces rubiginosus.</title>
        <authorList>
            <person name="Wong H.C."/>
            <person name="Ting Y."/>
            <person name="Lin H.C."/>
            <person name="Reichert F."/>
            <person name="Myambo K."/>
            <person name="Watt K.W."/>
            <person name="Toy P.L."/>
            <person name="Drummond R.J."/>
        </authorList>
    </citation>
    <scope>NUCLEOTIDE SEQUENCE [GENOMIC DNA]</scope>
</reference>
<dbReference type="EC" id="2.7.1.17" evidence="1"/>
<dbReference type="EMBL" id="M73789">
    <property type="protein sequence ID" value="AAA26837.1"/>
    <property type="molecule type" value="Genomic_DNA"/>
</dbReference>
<dbReference type="PIR" id="A41339">
    <property type="entry name" value="A41339"/>
</dbReference>
<dbReference type="SMR" id="P27156"/>
<dbReference type="GO" id="GO:0005524">
    <property type="term" value="F:ATP binding"/>
    <property type="evidence" value="ECO:0007669"/>
    <property type="project" value="UniProtKB-UniRule"/>
</dbReference>
<dbReference type="GO" id="GO:0004856">
    <property type="term" value="F:D-xylulokinase activity"/>
    <property type="evidence" value="ECO:0007669"/>
    <property type="project" value="UniProtKB-UniRule"/>
</dbReference>
<dbReference type="GO" id="GO:0042732">
    <property type="term" value="P:D-xylose metabolic process"/>
    <property type="evidence" value="ECO:0007669"/>
    <property type="project" value="UniProtKB-KW"/>
</dbReference>
<dbReference type="GO" id="GO:0005998">
    <property type="term" value="P:xylulose catabolic process"/>
    <property type="evidence" value="ECO:0007669"/>
    <property type="project" value="UniProtKB-UniRule"/>
</dbReference>
<dbReference type="CDD" id="cd07809">
    <property type="entry name" value="ASKHA_NBD_FGGY_BaXK-like"/>
    <property type="match status" value="1"/>
</dbReference>
<dbReference type="Gene3D" id="3.30.420.40">
    <property type="match status" value="2"/>
</dbReference>
<dbReference type="HAMAP" id="MF_02220">
    <property type="entry name" value="XylB"/>
    <property type="match status" value="1"/>
</dbReference>
<dbReference type="InterPro" id="IPR043129">
    <property type="entry name" value="ATPase_NBD"/>
</dbReference>
<dbReference type="InterPro" id="IPR000577">
    <property type="entry name" value="Carb_kinase_FGGY"/>
</dbReference>
<dbReference type="InterPro" id="IPR018483">
    <property type="entry name" value="Carb_kinase_FGGY_CS"/>
</dbReference>
<dbReference type="InterPro" id="IPR018485">
    <property type="entry name" value="FGGY_C"/>
</dbReference>
<dbReference type="InterPro" id="IPR050406">
    <property type="entry name" value="FGGY_Carb_Kinase"/>
</dbReference>
<dbReference type="InterPro" id="IPR018484">
    <property type="entry name" value="FGGY_N"/>
</dbReference>
<dbReference type="InterPro" id="IPR006000">
    <property type="entry name" value="Xylulokinase"/>
</dbReference>
<dbReference type="NCBIfam" id="TIGR01312">
    <property type="entry name" value="XylB"/>
    <property type="match status" value="1"/>
</dbReference>
<dbReference type="PANTHER" id="PTHR43095">
    <property type="entry name" value="SUGAR KINASE"/>
    <property type="match status" value="1"/>
</dbReference>
<dbReference type="PANTHER" id="PTHR43095:SF5">
    <property type="entry name" value="XYLULOSE KINASE"/>
    <property type="match status" value="1"/>
</dbReference>
<dbReference type="Pfam" id="PF02782">
    <property type="entry name" value="FGGY_C"/>
    <property type="match status" value="1"/>
</dbReference>
<dbReference type="Pfam" id="PF00370">
    <property type="entry name" value="FGGY_N"/>
    <property type="match status" value="1"/>
</dbReference>
<dbReference type="PIRSF" id="PIRSF000538">
    <property type="entry name" value="GlpK"/>
    <property type="match status" value="1"/>
</dbReference>
<dbReference type="SUPFAM" id="SSF53067">
    <property type="entry name" value="Actin-like ATPase domain"/>
    <property type="match status" value="2"/>
</dbReference>
<dbReference type="PROSITE" id="PS00933">
    <property type="entry name" value="FGGY_KINASES_1"/>
    <property type="match status" value="1"/>
</dbReference>
<dbReference type="PROSITE" id="PS00445">
    <property type="entry name" value="FGGY_KINASES_2"/>
    <property type="match status" value="1"/>
</dbReference>
<sequence length="481" mass="49822">MSAAEGPLVVGVDTSTQSTKALVVDVATGRVVASGQAPHTVTSGAGRESDPRQWWDALCEALRQCGEAAHEAAAVSIGGQQHGLVTLDGHGEPVRPALLWNDVRSAPQGHRLIEELGGAKFWAERTGSVPAASFTVTKWAWLAEHEPEAVRATRAVRLPHDYLTERLTGQGTTDRGDASGTGWWASGTEAYDEEILGHVGLDPALLPRVVRPGEVAGTVRDSHELPFSKGTLVACGTGDNAAAALGLGVRPGTPVMSLGTSGTVYAVTQRRPADPTGTVAGFADARGDWLPLACTLNCTLAVDRVAALLGLDREAVEPGHGVTLLPFLDGERTPNLPRSSGLLHGLRHDTTGGQLLQAAYDGAVYSLLAALDLVLDEDADPSAPLLLIGGGARGTAWQQTVRRLSGRAVQVPRAAELVALGAAAQAAGLLTGEDPAAVARRWETAAGPVLEAVERDEETLDRLAGVLSDAAPLLERGTGAG</sequence>
<gene>
    <name evidence="1" type="primary">xylB</name>
</gene>
<comment type="function">
    <text evidence="1">Catalyzes the phosphorylation of D-xylulose to D-xylulose 5-phosphate.</text>
</comment>
<comment type="catalytic activity">
    <reaction evidence="1">
        <text>D-xylulose + ATP = D-xylulose 5-phosphate + ADP + H(+)</text>
        <dbReference type="Rhea" id="RHEA:10964"/>
        <dbReference type="ChEBI" id="CHEBI:15378"/>
        <dbReference type="ChEBI" id="CHEBI:17140"/>
        <dbReference type="ChEBI" id="CHEBI:30616"/>
        <dbReference type="ChEBI" id="CHEBI:57737"/>
        <dbReference type="ChEBI" id="CHEBI:456216"/>
        <dbReference type="EC" id="2.7.1.17"/>
    </reaction>
</comment>
<comment type="similarity">
    <text evidence="1 2">Belongs to the FGGY kinase family.</text>
</comment>
<keyword id="KW-0067">ATP-binding</keyword>
<keyword id="KW-0119">Carbohydrate metabolism</keyword>
<keyword id="KW-0418">Kinase</keyword>
<keyword id="KW-0547">Nucleotide-binding</keyword>
<keyword id="KW-0808">Transferase</keyword>
<keyword id="KW-0859">Xylose metabolism</keyword>
<accession>P27156</accession>
<evidence type="ECO:0000255" key="1">
    <source>
        <dbReference type="HAMAP-Rule" id="MF_02220"/>
    </source>
</evidence>
<evidence type="ECO:0000305" key="2"/>
<organism>
    <name type="scientific">Streptomyces rubiginosus</name>
    <dbReference type="NCBI Taxonomy" id="1929"/>
    <lineage>
        <taxon>Bacteria</taxon>
        <taxon>Bacillati</taxon>
        <taxon>Actinomycetota</taxon>
        <taxon>Actinomycetes</taxon>
        <taxon>Kitasatosporales</taxon>
        <taxon>Streptomycetaceae</taxon>
        <taxon>Streptomyces</taxon>
        <taxon>Streptomyces pseudogriseolus group</taxon>
    </lineage>
</organism>